<keyword id="KW-0413">Isomerase</keyword>
<keyword id="KW-1185">Reference proteome</keyword>
<name>RPIA_RALN1</name>
<accession>Q8Y013</accession>
<protein>
    <recommendedName>
        <fullName evidence="1">Ribose-5-phosphate isomerase A</fullName>
        <ecNumber evidence="1">5.3.1.6</ecNumber>
    </recommendedName>
    <alternativeName>
        <fullName evidence="1">Phosphoriboisomerase A</fullName>
        <shortName evidence="1">PRI</shortName>
    </alternativeName>
</protein>
<evidence type="ECO:0000255" key="1">
    <source>
        <dbReference type="HAMAP-Rule" id="MF_00170"/>
    </source>
</evidence>
<organism>
    <name type="scientific">Ralstonia nicotianae (strain ATCC BAA-1114 / GMI1000)</name>
    <name type="common">Ralstonia solanacearum</name>
    <dbReference type="NCBI Taxonomy" id="267608"/>
    <lineage>
        <taxon>Bacteria</taxon>
        <taxon>Pseudomonadati</taxon>
        <taxon>Pseudomonadota</taxon>
        <taxon>Betaproteobacteria</taxon>
        <taxon>Burkholderiales</taxon>
        <taxon>Burkholderiaceae</taxon>
        <taxon>Ralstonia</taxon>
        <taxon>Ralstonia solanacearum species complex</taxon>
    </lineage>
</organism>
<reference key="1">
    <citation type="journal article" date="2002" name="Nature">
        <title>Genome sequence of the plant pathogen Ralstonia solanacearum.</title>
        <authorList>
            <person name="Salanoubat M."/>
            <person name="Genin S."/>
            <person name="Artiguenave F."/>
            <person name="Gouzy J."/>
            <person name="Mangenot S."/>
            <person name="Arlat M."/>
            <person name="Billault A."/>
            <person name="Brottier P."/>
            <person name="Camus J.-C."/>
            <person name="Cattolico L."/>
            <person name="Chandler M."/>
            <person name="Choisne N."/>
            <person name="Claudel-Renard C."/>
            <person name="Cunnac S."/>
            <person name="Demange N."/>
            <person name="Gaspin C."/>
            <person name="Lavie M."/>
            <person name="Moisan A."/>
            <person name="Robert C."/>
            <person name="Saurin W."/>
            <person name="Schiex T."/>
            <person name="Siguier P."/>
            <person name="Thebault P."/>
            <person name="Whalen M."/>
            <person name="Wincker P."/>
            <person name="Levy M."/>
            <person name="Weissenbach J."/>
            <person name="Boucher C.A."/>
        </authorList>
    </citation>
    <scope>NUCLEOTIDE SEQUENCE [LARGE SCALE GENOMIC DNA]</scope>
    <source>
        <strain>ATCC BAA-1114 / GMI1000</strain>
    </source>
</reference>
<dbReference type="EC" id="5.3.1.6" evidence="1"/>
<dbReference type="EMBL" id="AL646052">
    <property type="protein sequence ID" value="CAD14934.1"/>
    <property type="molecule type" value="Genomic_DNA"/>
</dbReference>
<dbReference type="RefSeq" id="WP_011001181.1">
    <property type="nucleotide sequence ID" value="NC_003295.1"/>
</dbReference>
<dbReference type="SMR" id="Q8Y013"/>
<dbReference type="STRING" id="267608.RSc1232"/>
<dbReference type="EnsemblBacteria" id="CAD14934">
    <property type="protein sequence ID" value="CAD14934"/>
    <property type="gene ID" value="RSc1232"/>
</dbReference>
<dbReference type="KEGG" id="rso:RSc1232"/>
<dbReference type="eggNOG" id="COG0120">
    <property type="taxonomic scope" value="Bacteria"/>
</dbReference>
<dbReference type="HOGENOM" id="CLU_056590_1_1_4"/>
<dbReference type="UniPathway" id="UPA00115">
    <property type="reaction ID" value="UER00412"/>
</dbReference>
<dbReference type="Proteomes" id="UP000001436">
    <property type="component" value="Chromosome"/>
</dbReference>
<dbReference type="GO" id="GO:0005829">
    <property type="term" value="C:cytosol"/>
    <property type="evidence" value="ECO:0007669"/>
    <property type="project" value="TreeGrafter"/>
</dbReference>
<dbReference type="GO" id="GO:0004751">
    <property type="term" value="F:ribose-5-phosphate isomerase activity"/>
    <property type="evidence" value="ECO:0007669"/>
    <property type="project" value="UniProtKB-UniRule"/>
</dbReference>
<dbReference type="GO" id="GO:0006014">
    <property type="term" value="P:D-ribose metabolic process"/>
    <property type="evidence" value="ECO:0007669"/>
    <property type="project" value="TreeGrafter"/>
</dbReference>
<dbReference type="GO" id="GO:0009052">
    <property type="term" value="P:pentose-phosphate shunt, non-oxidative branch"/>
    <property type="evidence" value="ECO:0007669"/>
    <property type="project" value="UniProtKB-UniRule"/>
</dbReference>
<dbReference type="CDD" id="cd01398">
    <property type="entry name" value="RPI_A"/>
    <property type="match status" value="1"/>
</dbReference>
<dbReference type="FunFam" id="3.40.50.1360:FF:000001">
    <property type="entry name" value="Ribose-5-phosphate isomerase A"/>
    <property type="match status" value="1"/>
</dbReference>
<dbReference type="Gene3D" id="3.30.70.260">
    <property type="match status" value="1"/>
</dbReference>
<dbReference type="Gene3D" id="3.40.50.1360">
    <property type="match status" value="1"/>
</dbReference>
<dbReference type="HAMAP" id="MF_00170">
    <property type="entry name" value="Rib_5P_isom_A"/>
    <property type="match status" value="1"/>
</dbReference>
<dbReference type="InterPro" id="IPR037171">
    <property type="entry name" value="NagB/RpiA_transferase-like"/>
</dbReference>
<dbReference type="InterPro" id="IPR020672">
    <property type="entry name" value="Ribose5P_isomerase_typA_subgr"/>
</dbReference>
<dbReference type="InterPro" id="IPR004788">
    <property type="entry name" value="Ribose5P_isomerase_type_A"/>
</dbReference>
<dbReference type="NCBIfam" id="NF001924">
    <property type="entry name" value="PRK00702.1"/>
    <property type="match status" value="1"/>
</dbReference>
<dbReference type="NCBIfam" id="TIGR00021">
    <property type="entry name" value="rpiA"/>
    <property type="match status" value="1"/>
</dbReference>
<dbReference type="PANTHER" id="PTHR11934">
    <property type="entry name" value="RIBOSE-5-PHOSPHATE ISOMERASE"/>
    <property type="match status" value="1"/>
</dbReference>
<dbReference type="PANTHER" id="PTHR11934:SF0">
    <property type="entry name" value="RIBOSE-5-PHOSPHATE ISOMERASE"/>
    <property type="match status" value="1"/>
</dbReference>
<dbReference type="Pfam" id="PF06026">
    <property type="entry name" value="Rib_5-P_isom_A"/>
    <property type="match status" value="1"/>
</dbReference>
<dbReference type="SUPFAM" id="SSF75445">
    <property type="entry name" value="D-ribose-5-phosphate isomerase (RpiA), lid domain"/>
    <property type="match status" value="1"/>
</dbReference>
<dbReference type="SUPFAM" id="SSF100950">
    <property type="entry name" value="NagB/RpiA/CoA transferase-like"/>
    <property type="match status" value="1"/>
</dbReference>
<gene>
    <name evidence="1" type="primary">rpiA</name>
    <name type="ordered locus">RSc1232</name>
    <name type="ORF">RS02791</name>
</gene>
<feature type="chain" id="PRO_0000158453" description="Ribose-5-phosphate isomerase A">
    <location>
        <begin position="1"/>
        <end position="228"/>
    </location>
</feature>
<feature type="active site" description="Proton acceptor" evidence="1">
    <location>
        <position position="107"/>
    </location>
</feature>
<feature type="binding site" evidence="1">
    <location>
        <begin position="32"/>
        <end position="35"/>
    </location>
    <ligand>
        <name>substrate</name>
    </ligand>
</feature>
<feature type="binding site" evidence="1">
    <location>
        <begin position="85"/>
        <end position="88"/>
    </location>
    <ligand>
        <name>substrate</name>
    </ligand>
</feature>
<feature type="binding site" evidence="1">
    <location>
        <begin position="98"/>
        <end position="101"/>
    </location>
    <ligand>
        <name>substrate</name>
    </ligand>
</feature>
<feature type="binding site" evidence="1">
    <location>
        <position position="125"/>
    </location>
    <ligand>
        <name>substrate</name>
    </ligand>
</feature>
<sequence length="228" mass="23637">MTQDELKALVAQAAADYVLANVPEGAVLGVGTGSTANLFIDAMAPHKARFAGAVSSSEASTRRLQGHGFAVLDLNEVDTIPVYVDGADEIDDTGAMIKGGGGALTREKIVASVAGRFVCIADGSKLVDVLGAFPLPVEVVPMARAAVARQLAALGGQPRLRMTKEGQIYQTDNGNVILDVSGLRIGEPKTLEAQINDIPGVVTVGLFAKRGADVLLLGTEAGVQRRDF</sequence>
<proteinExistence type="inferred from homology"/>
<comment type="function">
    <text evidence="1">Catalyzes the reversible conversion of ribose-5-phosphate to ribulose 5-phosphate.</text>
</comment>
<comment type="catalytic activity">
    <reaction evidence="1">
        <text>aldehydo-D-ribose 5-phosphate = D-ribulose 5-phosphate</text>
        <dbReference type="Rhea" id="RHEA:14657"/>
        <dbReference type="ChEBI" id="CHEBI:58121"/>
        <dbReference type="ChEBI" id="CHEBI:58273"/>
        <dbReference type="EC" id="5.3.1.6"/>
    </reaction>
</comment>
<comment type="pathway">
    <text evidence="1">Carbohydrate degradation; pentose phosphate pathway; D-ribose 5-phosphate from D-ribulose 5-phosphate (non-oxidative stage): step 1/1.</text>
</comment>
<comment type="subunit">
    <text evidence="1">Homodimer.</text>
</comment>
<comment type="similarity">
    <text evidence="1">Belongs to the ribose 5-phosphate isomerase family.</text>
</comment>